<reference key="1">
    <citation type="journal article" date="2005" name="Biochem. Biophys. Res. Commun.">
        <title>Cloning and functional analysis of human mTERFL encoding a novel mitochondrial transcription termination factor-like protein.</title>
        <authorList>
            <person name="Chen Y."/>
            <person name="Zhou G."/>
            <person name="Yu M."/>
            <person name="He Y."/>
            <person name="Tang W."/>
            <person name="Lai J."/>
            <person name="He J."/>
            <person name="Liu W."/>
            <person name="Tan D."/>
        </authorList>
    </citation>
    <scope>NUCLEOTIDE SEQUENCE [MRNA]</scope>
    <scope>FUNCTION</scope>
    <scope>SUBCELLULAR LOCATION</scope>
    <scope>TISSUE SPECIFICITY</scope>
</reference>
<reference key="2">
    <citation type="journal article" date="2004" name="Nat. Genet.">
        <title>Complete sequencing and characterization of 21,243 full-length human cDNAs.</title>
        <authorList>
            <person name="Ota T."/>
            <person name="Suzuki Y."/>
            <person name="Nishikawa T."/>
            <person name="Otsuki T."/>
            <person name="Sugiyama T."/>
            <person name="Irie R."/>
            <person name="Wakamatsu A."/>
            <person name="Hayashi K."/>
            <person name="Sato H."/>
            <person name="Nagai K."/>
            <person name="Kimura K."/>
            <person name="Makita H."/>
            <person name="Sekine M."/>
            <person name="Obayashi M."/>
            <person name="Nishi T."/>
            <person name="Shibahara T."/>
            <person name="Tanaka T."/>
            <person name="Ishii S."/>
            <person name="Yamamoto J."/>
            <person name="Saito K."/>
            <person name="Kawai Y."/>
            <person name="Isono Y."/>
            <person name="Nakamura Y."/>
            <person name="Nagahari K."/>
            <person name="Murakami K."/>
            <person name="Yasuda T."/>
            <person name="Iwayanagi T."/>
            <person name="Wagatsuma M."/>
            <person name="Shiratori A."/>
            <person name="Sudo H."/>
            <person name="Hosoiri T."/>
            <person name="Kaku Y."/>
            <person name="Kodaira H."/>
            <person name="Kondo H."/>
            <person name="Sugawara M."/>
            <person name="Takahashi M."/>
            <person name="Kanda K."/>
            <person name="Yokoi T."/>
            <person name="Furuya T."/>
            <person name="Kikkawa E."/>
            <person name="Omura Y."/>
            <person name="Abe K."/>
            <person name="Kamihara K."/>
            <person name="Katsuta N."/>
            <person name="Sato K."/>
            <person name="Tanikawa M."/>
            <person name="Yamazaki M."/>
            <person name="Ninomiya K."/>
            <person name="Ishibashi T."/>
            <person name="Yamashita H."/>
            <person name="Murakawa K."/>
            <person name="Fujimori K."/>
            <person name="Tanai H."/>
            <person name="Kimata M."/>
            <person name="Watanabe M."/>
            <person name="Hiraoka S."/>
            <person name="Chiba Y."/>
            <person name="Ishida S."/>
            <person name="Ono Y."/>
            <person name="Takiguchi S."/>
            <person name="Watanabe S."/>
            <person name="Yosida M."/>
            <person name="Hotuta T."/>
            <person name="Kusano J."/>
            <person name="Kanehori K."/>
            <person name="Takahashi-Fujii A."/>
            <person name="Hara H."/>
            <person name="Tanase T.-O."/>
            <person name="Nomura Y."/>
            <person name="Togiya S."/>
            <person name="Komai F."/>
            <person name="Hara R."/>
            <person name="Takeuchi K."/>
            <person name="Arita M."/>
            <person name="Imose N."/>
            <person name="Musashino K."/>
            <person name="Yuuki H."/>
            <person name="Oshima A."/>
            <person name="Sasaki N."/>
            <person name="Aotsuka S."/>
            <person name="Yoshikawa Y."/>
            <person name="Matsunawa H."/>
            <person name="Ichihara T."/>
            <person name="Shiohata N."/>
            <person name="Sano S."/>
            <person name="Moriya S."/>
            <person name="Momiyama H."/>
            <person name="Satoh N."/>
            <person name="Takami S."/>
            <person name="Terashima Y."/>
            <person name="Suzuki O."/>
            <person name="Nakagawa S."/>
            <person name="Senoh A."/>
            <person name="Mizoguchi H."/>
            <person name="Goto Y."/>
            <person name="Shimizu F."/>
            <person name="Wakebe H."/>
            <person name="Hishigaki H."/>
            <person name="Watanabe T."/>
            <person name="Sugiyama A."/>
            <person name="Takemoto M."/>
            <person name="Kawakami B."/>
            <person name="Yamazaki M."/>
            <person name="Watanabe K."/>
            <person name="Kumagai A."/>
            <person name="Itakura S."/>
            <person name="Fukuzumi Y."/>
            <person name="Fujimori Y."/>
            <person name="Komiyama M."/>
            <person name="Tashiro H."/>
            <person name="Tanigami A."/>
            <person name="Fujiwara T."/>
            <person name="Ono T."/>
            <person name="Yamada K."/>
            <person name="Fujii Y."/>
            <person name="Ozaki K."/>
            <person name="Hirao M."/>
            <person name="Ohmori Y."/>
            <person name="Kawabata A."/>
            <person name="Hikiji T."/>
            <person name="Kobatake N."/>
            <person name="Inagaki H."/>
            <person name="Ikema Y."/>
            <person name="Okamoto S."/>
            <person name="Okitani R."/>
            <person name="Kawakami T."/>
            <person name="Noguchi S."/>
            <person name="Itoh T."/>
            <person name="Shigeta K."/>
            <person name="Senba T."/>
            <person name="Matsumura K."/>
            <person name="Nakajima Y."/>
            <person name="Mizuno T."/>
            <person name="Morinaga M."/>
            <person name="Sasaki M."/>
            <person name="Togashi T."/>
            <person name="Oyama M."/>
            <person name="Hata H."/>
            <person name="Watanabe M."/>
            <person name="Komatsu T."/>
            <person name="Mizushima-Sugano J."/>
            <person name="Satoh T."/>
            <person name="Shirai Y."/>
            <person name="Takahashi Y."/>
            <person name="Nakagawa K."/>
            <person name="Okumura K."/>
            <person name="Nagase T."/>
            <person name="Nomura N."/>
            <person name="Kikuchi H."/>
            <person name="Masuho Y."/>
            <person name="Yamashita R."/>
            <person name="Nakai K."/>
            <person name="Yada T."/>
            <person name="Nakamura Y."/>
            <person name="Ohara O."/>
            <person name="Isogai T."/>
            <person name="Sugano S."/>
        </authorList>
    </citation>
    <scope>NUCLEOTIDE SEQUENCE [LARGE SCALE MRNA]</scope>
    <source>
        <tissue>Embryo</tissue>
    </source>
</reference>
<reference key="3">
    <citation type="submission" date="2005-04" db="EMBL/GenBank/DDBJ databases">
        <authorList>
            <person name="Suzuki Y."/>
            <person name="Sugano S."/>
            <person name="Totoki Y."/>
            <person name="Toyoda A."/>
            <person name="Takeda T."/>
            <person name="Sakaki Y."/>
            <person name="Tanaka A."/>
            <person name="Yokoyama S."/>
        </authorList>
    </citation>
    <scope>NUCLEOTIDE SEQUENCE [LARGE SCALE MRNA]</scope>
    <source>
        <tissue>Adipose tissue</tissue>
    </source>
</reference>
<reference key="4">
    <citation type="journal article" date="2007" name="BMC Genomics">
        <title>The full-ORF clone resource of the German cDNA consortium.</title>
        <authorList>
            <person name="Bechtel S."/>
            <person name="Rosenfelder H."/>
            <person name="Duda A."/>
            <person name="Schmidt C.P."/>
            <person name="Ernst U."/>
            <person name="Wellenreuther R."/>
            <person name="Mehrle A."/>
            <person name="Schuster C."/>
            <person name="Bahr A."/>
            <person name="Bloecker H."/>
            <person name="Heubner D."/>
            <person name="Hoerlein A."/>
            <person name="Michel G."/>
            <person name="Wedler H."/>
            <person name="Koehrer K."/>
            <person name="Ottenwaelder B."/>
            <person name="Poustka A."/>
            <person name="Wiemann S."/>
            <person name="Schupp I."/>
        </authorList>
    </citation>
    <scope>NUCLEOTIDE SEQUENCE [LARGE SCALE MRNA]</scope>
    <source>
        <tissue>Lymph node</tissue>
    </source>
</reference>
<reference key="5">
    <citation type="journal article" date="2006" name="Nature">
        <title>The finished DNA sequence of human chromosome 12.</title>
        <authorList>
            <person name="Scherer S.E."/>
            <person name="Muzny D.M."/>
            <person name="Buhay C.J."/>
            <person name="Chen R."/>
            <person name="Cree A."/>
            <person name="Ding Y."/>
            <person name="Dugan-Rocha S."/>
            <person name="Gill R."/>
            <person name="Gunaratne P."/>
            <person name="Harris R.A."/>
            <person name="Hawes A.C."/>
            <person name="Hernandez J."/>
            <person name="Hodgson A.V."/>
            <person name="Hume J."/>
            <person name="Jackson A."/>
            <person name="Khan Z.M."/>
            <person name="Kovar-Smith C."/>
            <person name="Lewis L.R."/>
            <person name="Lozado R.J."/>
            <person name="Metzker M.L."/>
            <person name="Milosavljevic A."/>
            <person name="Miner G.R."/>
            <person name="Montgomery K.T."/>
            <person name="Morgan M.B."/>
            <person name="Nazareth L.V."/>
            <person name="Scott G."/>
            <person name="Sodergren E."/>
            <person name="Song X.-Z."/>
            <person name="Steffen D."/>
            <person name="Lovering R.C."/>
            <person name="Wheeler D.A."/>
            <person name="Worley K.C."/>
            <person name="Yuan Y."/>
            <person name="Zhang Z."/>
            <person name="Adams C.Q."/>
            <person name="Ansari-Lari M.A."/>
            <person name="Ayele M."/>
            <person name="Brown M.J."/>
            <person name="Chen G."/>
            <person name="Chen Z."/>
            <person name="Clerc-Blankenburg K.P."/>
            <person name="Davis C."/>
            <person name="Delgado O."/>
            <person name="Dinh H.H."/>
            <person name="Draper H."/>
            <person name="Gonzalez-Garay M.L."/>
            <person name="Havlak P."/>
            <person name="Jackson L.R."/>
            <person name="Jacob L.S."/>
            <person name="Kelly S.H."/>
            <person name="Li L."/>
            <person name="Li Z."/>
            <person name="Liu J."/>
            <person name="Liu W."/>
            <person name="Lu J."/>
            <person name="Maheshwari M."/>
            <person name="Nguyen B.-V."/>
            <person name="Okwuonu G.O."/>
            <person name="Pasternak S."/>
            <person name="Perez L.M."/>
            <person name="Plopper F.J.H."/>
            <person name="Santibanez J."/>
            <person name="Shen H."/>
            <person name="Tabor P.E."/>
            <person name="Verduzco D."/>
            <person name="Waldron L."/>
            <person name="Wang Q."/>
            <person name="Williams G.A."/>
            <person name="Zhang J."/>
            <person name="Zhou J."/>
            <person name="Allen C.C."/>
            <person name="Amin A.G."/>
            <person name="Anyalebechi V."/>
            <person name="Bailey M."/>
            <person name="Barbaria J.A."/>
            <person name="Bimage K.E."/>
            <person name="Bryant N.P."/>
            <person name="Burch P.E."/>
            <person name="Burkett C.E."/>
            <person name="Burrell K.L."/>
            <person name="Calderon E."/>
            <person name="Cardenas V."/>
            <person name="Carter K."/>
            <person name="Casias K."/>
            <person name="Cavazos I."/>
            <person name="Cavazos S.R."/>
            <person name="Ceasar H."/>
            <person name="Chacko J."/>
            <person name="Chan S.N."/>
            <person name="Chavez D."/>
            <person name="Christopoulos C."/>
            <person name="Chu J."/>
            <person name="Cockrell R."/>
            <person name="Cox C.D."/>
            <person name="Dang M."/>
            <person name="Dathorne S.R."/>
            <person name="David R."/>
            <person name="Davis C.M."/>
            <person name="Davy-Carroll L."/>
            <person name="Deshazo D.R."/>
            <person name="Donlin J.E."/>
            <person name="D'Souza L."/>
            <person name="Eaves K.A."/>
            <person name="Egan A."/>
            <person name="Emery-Cohen A.J."/>
            <person name="Escotto M."/>
            <person name="Flagg N."/>
            <person name="Forbes L.D."/>
            <person name="Gabisi A.M."/>
            <person name="Garza M."/>
            <person name="Hamilton C."/>
            <person name="Henderson N."/>
            <person name="Hernandez O."/>
            <person name="Hines S."/>
            <person name="Hogues M.E."/>
            <person name="Huang M."/>
            <person name="Idlebird D.G."/>
            <person name="Johnson R."/>
            <person name="Jolivet A."/>
            <person name="Jones S."/>
            <person name="Kagan R."/>
            <person name="King L.M."/>
            <person name="Leal B."/>
            <person name="Lebow H."/>
            <person name="Lee S."/>
            <person name="LeVan J.M."/>
            <person name="Lewis L.C."/>
            <person name="London P."/>
            <person name="Lorensuhewa L.M."/>
            <person name="Loulseged H."/>
            <person name="Lovett D.A."/>
            <person name="Lucier A."/>
            <person name="Lucier R.L."/>
            <person name="Ma J."/>
            <person name="Madu R.C."/>
            <person name="Mapua P."/>
            <person name="Martindale A.D."/>
            <person name="Martinez E."/>
            <person name="Massey E."/>
            <person name="Mawhiney S."/>
            <person name="Meador M.G."/>
            <person name="Mendez S."/>
            <person name="Mercado C."/>
            <person name="Mercado I.C."/>
            <person name="Merritt C.E."/>
            <person name="Miner Z.L."/>
            <person name="Minja E."/>
            <person name="Mitchell T."/>
            <person name="Mohabbat F."/>
            <person name="Mohabbat K."/>
            <person name="Montgomery B."/>
            <person name="Moore N."/>
            <person name="Morris S."/>
            <person name="Munidasa M."/>
            <person name="Ngo R.N."/>
            <person name="Nguyen N.B."/>
            <person name="Nickerson E."/>
            <person name="Nwaokelemeh O.O."/>
            <person name="Nwokenkwo S."/>
            <person name="Obregon M."/>
            <person name="Oguh M."/>
            <person name="Oragunye N."/>
            <person name="Oviedo R.J."/>
            <person name="Parish B.J."/>
            <person name="Parker D.N."/>
            <person name="Parrish J."/>
            <person name="Parks K.L."/>
            <person name="Paul H.A."/>
            <person name="Payton B.A."/>
            <person name="Perez A."/>
            <person name="Perrin W."/>
            <person name="Pickens A."/>
            <person name="Primus E.L."/>
            <person name="Pu L.-L."/>
            <person name="Puazo M."/>
            <person name="Quiles M.M."/>
            <person name="Quiroz J.B."/>
            <person name="Rabata D."/>
            <person name="Reeves K."/>
            <person name="Ruiz S.J."/>
            <person name="Shao H."/>
            <person name="Sisson I."/>
            <person name="Sonaike T."/>
            <person name="Sorelle R.P."/>
            <person name="Sutton A.E."/>
            <person name="Svatek A.F."/>
            <person name="Svetz L.A."/>
            <person name="Tamerisa K.S."/>
            <person name="Taylor T.R."/>
            <person name="Teague B."/>
            <person name="Thomas N."/>
            <person name="Thorn R.D."/>
            <person name="Trejos Z.Y."/>
            <person name="Trevino B.K."/>
            <person name="Ukegbu O.N."/>
            <person name="Urban J.B."/>
            <person name="Vasquez L.I."/>
            <person name="Vera V.A."/>
            <person name="Villasana D.M."/>
            <person name="Wang L."/>
            <person name="Ward-Moore S."/>
            <person name="Warren J.T."/>
            <person name="Wei X."/>
            <person name="White F."/>
            <person name="Williamson A.L."/>
            <person name="Wleczyk R."/>
            <person name="Wooden H.S."/>
            <person name="Wooden S.H."/>
            <person name="Yen J."/>
            <person name="Yoon L."/>
            <person name="Yoon V."/>
            <person name="Zorrilla S.E."/>
            <person name="Nelson D."/>
            <person name="Kucherlapati R."/>
            <person name="Weinstock G."/>
            <person name="Gibbs R.A."/>
        </authorList>
    </citation>
    <scope>NUCLEOTIDE SEQUENCE [LARGE SCALE GENOMIC DNA]</scope>
</reference>
<reference key="6">
    <citation type="journal article" date="2004" name="Genome Res.">
        <title>The status, quality, and expansion of the NIH full-length cDNA project: the Mammalian Gene Collection (MGC).</title>
        <authorList>
            <consortium name="The MGC Project Team"/>
        </authorList>
    </citation>
    <scope>NUCLEOTIDE SEQUENCE [LARGE SCALE MRNA]</scope>
    <source>
        <tissue>Bone marrow</tissue>
        <tissue>Brain</tissue>
    </source>
</reference>
<reference key="7">
    <citation type="journal article" date="2009" name="Biochim. Biophys. Acta">
        <title>MTERF2 is a nucleoid component in mammalian mitochondria.</title>
        <authorList>
            <person name="Pellegrini M."/>
            <person name="Asin-Cayuela J."/>
            <person name="Erdjument-Bromage H."/>
            <person name="Tempst P."/>
            <person name="Larsson N.G."/>
            <person name="Gustafsson C.M."/>
        </authorList>
    </citation>
    <scope>PARTIAL PROTEIN SEQUENCE</scope>
    <scope>FUNCTION</scope>
    <scope>SUBUNIT</scope>
    <scope>IDENTIFICATION BY MASS SPECTROMETRY</scope>
</reference>
<reference key="8">
    <citation type="journal article" date="2011" name="Acta Biochim. Biophys. Sin.">
        <title>Mitochondrial transcription termination factor 2 binds to entire mitochondrial DNA and negatively regulates mitochondrial gene expression.</title>
        <authorList>
            <person name="Huang W."/>
            <person name="Yu M."/>
            <person name="Jiao Y."/>
            <person name="Ma J."/>
            <person name="Ma M."/>
            <person name="Wang Z."/>
            <person name="Wu H."/>
            <person name="Tan D."/>
        </authorList>
    </citation>
    <scope>FUNCTION</scope>
</reference>
<gene>
    <name type="primary">MTERF2</name>
    <name type="synonym">MTERFD3</name>
</gene>
<protein>
    <recommendedName>
        <fullName>Transcription termination factor 2, mitochondrial</fullName>
    </recommendedName>
    <alternativeName>
        <fullName>Mitochondrial transcription termination factor 2</fullName>
        <shortName>mTERF2</shortName>
    </alternativeName>
    <alternativeName>
        <fullName>Mitochondrial transcription termination factor-like protein</fullName>
        <shortName>mTERF-like</shortName>
        <shortName evidence="5">mTERFL</shortName>
    </alternativeName>
    <alternativeName>
        <fullName>mTERF domain-containing protein 3, mitochondrial</fullName>
    </alternativeName>
</protein>
<comment type="function">
    <text evidence="2 3 4">Binds mitochondrial DNA and plays a role in the regulation of transcription of mitochondrial mRNA and rRNA species.</text>
</comment>
<comment type="subunit">
    <text evidence="3">Monomer.</text>
</comment>
<comment type="interaction">
    <interactant intactId="EBI-17857560">
        <id>Q49AM1</id>
    </interactant>
    <interactant intactId="EBI-715495">
        <id>P05090</id>
        <label>APOD</label>
    </interactant>
    <organismsDiffer>false</organismsDiffer>
    <experiments>3</experiments>
</comment>
<comment type="interaction">
    <interactant intactId="EBI-17857560">
        <id>Q49AM1</id>
    </interactant>
    <interactant intactId="EBI-3917235">
        <id>Q9NTJ5</id>
        <label>SACM1L</label>
    </interactant>
    <organismsDiffer>false</organismsDiffer>
    <experiments>3</experiments>
</comment>
<comment type="interaction">
    <interactant intactId="EBI-17857560">
        <id>Q49AM1</id>
    </interactant>
    <interactant intactId="EBI-2695795">
        <id>O43752</id>
        <label>STX6</label>
    </interactant>
    <organismsDiffer>false</organismsDiffer>
    <experiments>3</experiments>
</comment>
<comment type="subcellular location">
    <subcellularLocation>
        <location evidence="2">Mitochondrion</location>
    </subcellularLocation>
    <subcellularLocation>
        <location evidence="1">Mitochondrion matrix</location>
        <location evidence="1">Mitochondrion nucleoid</location>
    </subcellularLocation>
</comment>
<comment type="tissue specificity">
    <text evidence="2">Expressed in skeletal muscle, heart, liver and pancreas.</text>
</comment>
<comment type="similarity">
    <text evidence="6">Belongs to the mTERF family.</text>
</comment>
<sequence length="385" mass="44414">MLWKLLLRSQSCRLCSFRKMRSPPKYRPFLACFTYTTDKQSSKENTRTVEKLYKCSVDIRKIRRLKGWVLLEDETYVEEIANILQELGADETAVASILERCPEAIVCSPTAVNTQRKLWQLVCKNEEELIKLIEQFPESFFTIKDQENQKLNVQFFQELGLKNVVISRLLTAAPNVFHNPVEKNKQMVRILQESYLDVGGSEANMKVWLLKLLSQNPFILLNSPTAIKETLEFLQEQGFTSFEILQLLSKLKGFLFQLCPRSIQNSISFSKNAFKCTDHDLKQLVLKCPALLYYSVPVLEERMQGLLREGISIAQIRETPMVLELTPQIVQYRIRKLNSSGYRIKDGHLANLNGSKKEFEANFGKIQAKKVRPLFNPVAPLNVEE</sequence>
<dbReference type="EMBL" id="AY008301">
    <property type="protein sequence ID" value="AAG22860.1"/>
    <property type="molecule type" value="mRNA"/>
</dbReference>
<dbReference type="EMBL" id="AK024124">
    <property type="protein sequence ID" value="BAB14834.1"/>
    <property type="molecule type" value="mRNA"/>
</dbReference>
<dbReference type="EMBL" id="AK222558">
    <property type="protein sequence ID" value="BAD96278.1"/>
    <property type="molecule type" value="mRNA"/>
</dbReference>
<dbReference type="EMBL" id="AL832827">
    <property type="protein sequence ID" value="CAI46173.1"/>
    <property type="molecule type" value="mRNA"/>
</dbReference>
<dbReference type="EMBL" id="AC007541">
    <property type="status" value="NOT_ANNOTATED_CDS"/>
    <property type="molecule type" value="Genomic_DNA"/>
</dbReference>
<dbReference type="EMBL" id="BC025984">
    <property type="protein sequence ID" value="AAH25984.1"/>
    <property type="molecule type" value="mRNA"/>
</dbReference>
<dbReference type="EMBL" id="BC036066">
    <property type="protein sequence ID" value="AAH36066.1"/>
    <property type="molecule type" value="mRNA"/>
</dbReference>
<dbReference type="CCDS" id="CCDS9111.1"/>
<dbReference type="RefSeq" id="NP_001028222.1">
    <property type="nucleotide sequence ID" value="NM_001033050.3"/>
</dbReference>
<dbReference type="RefSeq" id="NP_079474.2">
    <property type="nucleotide sequence ID" value="NM_025198.4"/>
</dbReference>
<dbReference type="RefSeq" id="XP_011537069.1">
    <property type="nucleotide sequence ID" value="XM_011538767.3"/>
</dbReference>
<dbReference type="RefSeq" id="XP_016875474.1">
    <property type="nucleotide sequence ID" value="XM_017019985.3"/>
</dbReference>
<dbReference type="RefSeq" id="XP_016875475.1">
    <property type="nucleotide sequence ID" value="XM_017019986.2"/>
</dbReference>
<dbReference type="RefSeq" id="XP_016875476.1">
    <property type="nucleotide sequence ID" value="XM_017019987.2"/>
</dbReference>
<dbReference type="RefSeq" id="XP_054229264.1">
    <property type="nucleotide sequence ID" value="XM_054373289.1"/>
</dbReference>
<dbReference type="RefSeq" id="XP_054229265.1">
    <property type="nucleotide sequence ID" value="XM_054373290.1"/>
</dbReference>
<dbReference type="RefSeq" id="XP_054229266.1">
    <property type="nucleotide sequence ID" value="XM_054373291.1"/>
</dbReference>
<dbReference type="RefSeq" id="XP_054229267.1">
    <property type="nucleotide sequence ID" value="XM_054373292.1"/>
</dbReference>
<dbReference type="SMR" id="Q49AM1"/>
<dbReference type="BioGRID" id="123214">
    <property type="interactions" value="9"/>
</dbReference>
<dbReference type="FunCoup" id="Q49AM1">
    <property type="interactions" value="328"/>
</dbReference>
<dbReference type="IntAct" id="Q49AM1">
    <property type="interactions" value="8"/>
</dbReference>
<dbReference type="STRING" id="9606.ENSP00000447651"/>
<dbReference type="iPTMnet" id="Q49AM1"/>
<dbReference type="PhosphoSitePlus" id="Q49AM1"/>
<dbReference type="BioMuta" id="MTERF2"/>
<dbReference type="DMDM" id="118595440"/>
<dbReference type="jPOST" id="Q49AM1"/>
<dbReference type="MassIVE" id="Q49AM1"/>
<dbReference type="PaxDb" id="9606-ENSP00000447651"/>
<dbReference type="PeptideAtlas" id="Q49AM1"/>
<dbReference type="ProteomicsDB" id="62055"/>
<dbReference type="Pumba" id="Q49AM1"/>
<dbReference type="Antibodypedia" id="1265">
    <property type="antibodies" value="72 antibodies from 20 providers"/>
</dbReference>
<dbReference type="DNASU" id="80298"/>
<dbReference type="Ensembl" id="ENST00000240050.9">
    <property type="protein sequence ID" value="ENSP00000240050.4"/>
    <property type="gene ID" value="ENSG00000120832.11"/>
</dbReference>
<dbReference type="Ensembl" id="ENST00000392830.6">
    <property type="protein sequence ID" value="ENSP00000376575.2"/>
    <property type="gene ID" value="ENSG00000120832.11"/>
</dbReference>
<dbReference type="Ensembl" id="ENST00000552029.1">
    <property type="protein sequence ID" value="ENSP00000447651.1"/>
    <property type="gene ID" value="ENSG00000120832.11"/>
</dbReference>
<dbReference type="Ensembl" id="ENST00000713581.1">
    <property type="protein sequence ID" value="ENSP00000518873.1"/>
    <property type="gene ID" value="ENSG00000120832.11"/>
</dbReference>
<dbReference type="GeneID" id="80298"/>
<dbReference type="KEGG" id="hsa:80298"/>
<dbReference type="MANE-Select" id="ENST00000240050.9">
    <property type="protein sequence ID" value="ENSP00000240050.4"/>
    <property type="RefSeq nucleotide sequence ID" value="NM_001033050.3"/>
    <property type="RefSeq protein sequence ID" value="NP_001028222.1"/>
</dbReference>
<dbReference type="UCSC" id="uc001tme.2">
    <property type="organism name" value="human"/>
</dbReference>
<dbReference type="AGR" id="HGNC:30779"/>
<dbReference type="CTD" id="80298"/>
<dbReference type="GeneCards" id="MTERF2"/>
<dbReference type="HGNC" id="HGNC:30779">
    <property type="gene designation" value="MTERF2"/>
</dbReference>
<dbReference type="HPA" id="ENSG00000120832">
    <property type="expression patterns" value="Low tissue specificity"/>
</dbReference>
<dbReference type="MIM" id="616929">
    <property type="type" value="gene"/>
</dbReference>
<dbReference type="neXtProt" id="NX_Q49AM1"/>
<dbReference type="OpenTargets" id="ENSG00000120832"/>
<dbReference type="PharmGKB" id="PA142671311"/>
<dbReference type="VEuPathDB" id="HostDB:ENSG00000120832"/>
<dbReference type="eggNOG" id="KOG1267">
    <property type="taxonomic scope" value="Eukaryota"/>
</dbReference>
<dbReference type="GeneTree" id="ENSGT00530000063817"/>
<dbReference type="HOGENOM" id="CLU_058644_0_0_1"/>
<dbReference type="InParanoid" id="Q49AM1"/>
<dbReference type="OMA" id="PEAVLCN"/>
<dbReference type="OrthoDB" id="9868878at2759"/>
<dbReference type="PAN-GO" id="Q49AM1">
    <property type="GO annotations" value="3 GO annotations based on evolutionary models"/>
</dbReference>
<dbReference type="PhylomeDB" id="Q49AM1"/>
<dbReference type="TreeFam" id="TF330821"/>
<dbReference type="PathwayCommons" id="Q49AM1"/>
<dbReference type="SignaLink" id="Q49AM1"/>
<dbReference type="BioGRID-ORCS" id="80298">
    <property type="hits" value="13 hits in 1148 CRISPR screens"/>
</dbReference>
<dbReference type="GenomeRNAi" id="80298"/>
<dbReference type="Pharos" id="Q49AM1">
    <property type="development level" value="Tbio"/>
</dbReference>
<dbReference type="PRO" id="PR:Q49AM1"/>
<dbReference type="Proteomes" id="UP000005640">
    <property type="component" value="Chromosome 12"/>
</dbReference>
<dbReference type="RNAct" id="Q49AM1">
    <property type="molecule type" value="protein"/>
</dbReference>
<dbReference type="Bgee" id="ENSG00000120832">
    <property type="expression patterns" value="Expressed in left ventricle myocardium and 187 other cell types or tissues"/>
</dbReference>
<dbReference type="ExpressionAtlas" id="Q49AM1">
    <property type="expression patterns" value="baseline and differential"/>
</dbReference>
<dbReference type="GO" id="GO:0005759">
    <property type="term" value="C:mitochondrial matrix"/>
    <property type="evidence" value="ECO:0000318"/>
    <property type="project" value="GO_Central"/>
</dbReference>
<dbReference type="GO" id="GO:0042645">
    <property type="term" value="C:mitochondrial nucleoid"/>
    <property type="evidence" value="ECO:0000250"/>
    <property type="project" value="UniProtKB"/>
</dbReference>
<dbReference type="GO" id="GO:0005739">
    <property type="term" value="C:mitochondrion"/>
    <property type="evidence" value="ECO:0000314"/>
    <property type="project" value="UniProtKB"/>
</dbReference>
<dbReference type="GO" id="GO:0003677">
    <property type="term" value="F:DNA binding"/>
    <property type="evidence" value="ECO:0000314"/>
    <property type="project" value="UniProtKB"/>
</dbReference>
<dbReference type="GO" id="GO:0003690">
    <property type="term" value="F:double-stranded DNA binding"/>
    <property type="evidence" value="ECO:0007669"/>
    <property type="project" value="InterPro"/>
</dbReference>
<dbReference type="GO" id="GO:0003676">
    <property type="term" value="F:nucleic acid binding"/>
    <property type="evidence" value="ECO:0000318"/>
    <property type="project" value="GO_Central"/>
</dbReference>
<dbReference type="GO" id="GO:0006355">
    <property type="term" value="P:regulation of DNA-templated transcription"/>
    <property type="evidence" value="ECO:0007669"/>
    <property type="project" value="InterPro"/>
</dbReference>
<dbReference type="GO" id="GO:0006393">
    <property type="term" value="P:termination of mitochondrial transcription"/>
    <property type="evidence" value="ECO:0000318"/>
    <property type="project" value="GO_Central"/>
</dbReference>
<dbReference type="FunFam" id="1.25.70.10:FF:000003">
    <property type="entry name" value="transcription termination factor 2, mitochondrial"/>
    <property type="match status" value="1"/>
</dbReference>
<dbReference type="Gene3D" id="1.25.70.10">
    <property type="entry name" value="Transcription termination factor 3, mitochondrial"/>
    <property type="match status" value="1"/>
</dbReference>
<dbReference type="InterPro" id="IPR003690">
    <property type="entry name" value="MTERF"/>
</dbReference>
<dbReference type="InterPro" id="IPR038538">
    <property type="entry name" value="MTERF_sf"/>
</dbReference>
<dbReference type="PANTHER" id="PTHR15437:SF1">
    <property type="entry name" value="TRANSCRIPTION TERMINATION FACTOR 2, MITOCHONDRIAL"/>
    <property type="match status" value="1"/>
</dbReference>
<dbReference type="PANTHER" id="PTHR15437">
    <property type="entry name" value="TRANSCRIPTION TERMINATION FACTOR, MITOCHONDRIAL"/>
    <property type="match status" value="1"/>
</dbReference>
<dbReference type="Pfam" id="PF02536">
    <property type="entry name" value="mTERF"/>
    <property type="match status" value="1"/>
</dbReference>
<dbReference type="SMART" id="SM00733">
    <property type="entry name" value="Mterf"/>
    <property type="match status" value="4"/>
</dbReference>
<proteinExistence type="evidence at protein level"/>
<name>MTEF2_HUMAN</name>
<organism>
    <name type="scientific">Homo sapiens</name>
    <name type="common">Human</name>
    <dbReference type="NCBI Taxonomy" id="9606"/>
    <lineage>
        <taxon>Eukaryota</taxon>
        <taxon>Metazoa</taxon>
        <taxon>Chordata</taxon>
        <taxon>Craniata</taxon>
        <taxon>Vertebrata</taxon>
        <taxon>Euteleostomi</taxon>
        <taxon>Mammalia</taxon>
        <taxon>Eutheria</taxon>
        <taxon>Euarchontoglires</taxon>
        <taxon>Primates</taxon>
        <taxon>Haplorrhini</taxon>
        <taxon>Catarrhini</taxon>
        <taxon>Hominidae</taxon>
        <taxon>Homo</taxon>
    </lineage>
</organism>
<keyword id="KW-0903">Direct protein sequencing</keyword>
<keyword id="KW-0496">Mitochondrion</keyword>
<keyword id="KW-1135">Mitochondrion nucleoid</keyword>
<keyword id="KW-1267">Proteomics identification</keyword>
<keyword id="KW-1185">Reference proteome</keyword>
<keyword id="KW-0804">Transcription</keyword>
<keyword id="KW-0805">Transcription regulation</keyword>
<keyword id="KW-0809">Transit peptide</keyword>
<accession>Q49AM1</accession>
<accession>Q53HM2</accession>
<accession>Q9H4L6</accession>
<accession>Q9H7Y9</accession>
<evidence type="ECO:0000250" key="1">
    <source>
        <dbReference type="UniProtKB" id="Q8BKY8"/>
    </source>
</evidence>
<evidence type="ECO:0000269" key="2">
    <source>
    </source>
</evidence>
<evidence type="ECO:0000269" key="3">
    <source>
    </source>
</evidence>
<evidence type="ECO:0000269" key="4">
    <source>
    </source>
</evidence>
<evidence type="ECO:0000303" key="5">
    <source>
    </source>
</evidence>
<evidence type="ECO:0000305" key="6"/>
<feature type="transit peptide" description="Mitochondrion" evidence="3">
    <location>
        <begin position="1"/>
        <end position="35"/>
    </location>
</feature>
<feature type="chain" id="PRO_0000255464" description="Transcription termination factor 2, mitochondrial">
    <location>
        <begin position="36"/>
        <end position="385"/>
    </location>
</feature>
<feature type="sequence variant" id="VAR_034113" description="In dbSNP:rs34238336.">
    <original>L</original>
    <variation>V</variation>
    <location>
        <position position="14"/>
    </location>
</feature>
<feature type="sequence variant" id="VAR_053787" description="In dbSNP:rs35305400.">
    <original>A</original>
    <variation>V</variation>
    <location>
        <position position="31"/>
    </location>
</feature>
<feature type="sequence variant" id="VAR_034114" description="In dbSNP:rs35548605.">
    <original>A</original>
    <variation>G</variation>
    <location>
        <position position="81"/>
    </location>
</feature>
<feature type="sequence variant" id="VAR_053788" description="In dbSNP:rs1043157.">
    <original>V</original>
    <variation>I</variation>
    <location>
        <position position="198"/>
    </location>
</feature>
<feature type="sequence conflict" description="In Ref. 3; BAD96278." evidence="6" ref="3">
    <original>F</original>
    <variation>S</variation>
    <location>
        <position position="140"/>
    </location>
</feature>
<feature type="sequence conflict" description="In Ref. 5; AAH36066." evidence="6" ref="5">
    <original>T</original>
    <variation>A</variation>
    <location>
        <position position="171"/>
    </location>
</feature>
<feature type="sequence conflict" description="In Ref. 2; BAB14834." evidence="6" ref="2">
    <original>E</original>
    <variation>G</variation>
    <location>
        <position position="236"/>
    </location>
</feature>
<feature type="sequence conflict" description="In Ref. 3; BAD96278." evidence="6" ref="3">
    <original>V</original>
    <variation>A</variation>
    <location>
        <position position="383"/>
    </location>
</feature>